<reference key="1">
    <citation type="journal article" date="2007" name="PLoS ONE">
        <title>Genome sequencing shows that European isolates of Francisella tularensis subspecies tularensis are almost identical to US laboratory strain Schu S4.</title>
        <authorList>
            <person name="Chaudhuri R.R."/>
            <person name="Ren C.-P."/>
            <person name="Desmond L."/>
            <person name="Vincent G.A."/>
            <person name="Silman N.J."/>
            <person name="Brehm J.K."/>
            <person name="Elmore M.J."/>
            <person name="Hudson M.J."/>
            <person name="Forsman M."/>
            <person name="Isherwood K.E."/>
            <person name="Gurycova D."/>
            <person name="Minton N.P."/>
            <person name="Titball R.W."/>
            <person name="Pallen M.J."/>
            <person name="Vipond R."/>
        </authorList>
    </citation>
    <scope>NUCLEOTIDE SEQUENCE [LARGE SCALE GENOMIC DNA]</scope>
    <source>
        <strain>FSC 198</strain>
    </source>
</reference>
<dbReference type="EC" id="3.1.1.29" evidence="1"/>
<dbReference type="EMBL" id="AM286280">
    <property type="protein sequence ID" value="CAL08696.1"/>
    <property type="molecule type" value="Genomic_DNA"/>
</dbReference>
<dbReference type="RefSeq" id="WP_003020470.1">
    <property type="nucleotide sequence ID" value="NC_008245.1"/>
</dbReference>
<dbReference type="SMR" id="Q14IE8"/>
<dbReference type="KEGG" id="ftf:FTF0680c"/>
<dbReference type="HOGENOM" id="CLU_062456_3_1_6"/>
<dbReference type="GO" id="GO:0005737">
    <property type="term" value="C:cytoplasm"/>
    <property type="evidence" value="ECO:0007669"/>
    <property type="project" value="UniProtKB-SubCell"/>
</dbReference>
<dbReference type="GO" id="GO:0004045">
    <property type="term" value="F:peptidyl-tRNA hydrolase activity"/>
    <property type="evidence" value="ECO:0007669"/>
    <property type="project" value="UniProtKB-UniRule"/>
</dbReference>
<dbReference type="GO" id="GO:0000049">
    <property type="term" value="F:tRNA binding"/>
    <property type="evidence" value="ECO:0007669"/>
    <property type="project" value="UniProtKB-UniRule"/>
</dbReference>
<dbReference type="GO" id="GO:0006515">
    <property type="term" value="P:protein quality control for misfolded or incompletely synthesized proteins"/>
    <property type="evidence" value="ECO:0007669"/>
    <property type="project" value="UniProtKB-UniRule"/>
</dbReference>
<dbReference type="GO" id="GO:0072344">
    <property type="term" value="P:rescue of stalled ribosome"/>
    <property type="evidence" value="ECO:0007669"/>
    <property type="project" value="UniProtKB-UniRule"/>
</dbReference>
<dbReference type="CDD" id="cd00462">
    <property type="entry name" value="PTH"/>
    <property type="match status" value="1"/>
</dbReference>
<dbReference type="FunFam" id="3.40.50.1470:FF:000001">
    <property type="entry name" value="Peptidyl-tRNA hydrolase"/>
    <property type="match status" value="1"/>
</dbReference>
<dbReference type="Gene3D" id="3.40.50.1470">
    <property type="entry name" value="Peptidyl-tRNA hydrolase"/>
    <property type="match status" value="1"/>
</dbReference>
<dbReference type="HAMAP" id="MF_00083">
    <property type="entry name" value="Pept_tRNA_hydro_bact"/>
    <property type="match status" value="1"/>
</dbReference>
<dbReference type="InterPro" id="IPR001328">
    <property type="entry name" value="Pept_tRNA_hydro"/>
</dbReference>
<dbReference type="InterPro" id="IPR018171">
    <property type="entry name" value="Pept_tRNA_hydro_CS"/>
</dbReference>
<dbReference type="InterPro" id="IPR036416">
    <property type="entry name" value="Pept_tRNA_hydro_sf"/>
</dbReference>
<dbReference type="NCBIfam" id="TIGR00447">
    <property type="entry name" value="pth"/>
    <property type="match status" value="1"/>
</dbReference>
<dbReference type="PANTHER" id="PTHR17224">
    <property type="entry name" value="PEPTIDYL-TRNA HYDROLASE"/>
    <property type="match status" value="1"/>
</dbReference>
<dbReference type="PANTHER" id="PTHR17224:SF1">
    <property type="entry name" value="PEPTIDYL-TRNA HYDROLASE"/>
    <property type="match status" value="1"/>
</dbReference>
<dbReference type="Pfam" id="PF01195">
    <property type="entry name" value="Pept_tRNA_hydro"/>
    <property type="match status" value="1"/>
</dbReference>
<dbReference type="SUPFAM" id="SSF53178">
    <property type="entry name" value="Peptidyl-tRNA hydrolase-like"/>
    <property type="match status" value="1"/>
</dbReference>
<dbReference type="PROSITE" id="PS01196">
    <property type="entry name" value="PEPT_TRNA_HYDROL_2"/>
    <property type="match status" value="1"/>
</dbReference>
<accession>Q14IE8</accession>
<feature type="chain" id="PRO_0000264040" description="Peptidyl-tRNA hydrolase">
    <location>
        <begin position="1"/>
        <end position="191"/>
    </location>
</feature>
<feature type="active site" description="Proton acceptor" evidence="1">
    <location>
        <position position="22"/>
    </location>
</feature>
<feature type="binding site" evidence="1">
    <location>
        <position position="17"/>
    </location>
    <ligand>
        <name>tRNA</name>
        <dbReference type="ChEBI" id="CHEBI:17843"/>
    </ligand>
</feature>
<feature type="binding site" evidence="1">
    <location>
        <position position="68"/>
    </location>
    <ligand>
        <name>tRNA</name>
        <dbReference type="ChEBI" id="CHEBI:17843"/>
    </ligand>
</feature>
<feature type="binding site" evidence="1">
    <location>
        <position position="70"/>
    </location>
    <ligand>
        <name>tRNA</name>
        <dbReference type="ChEBI" id="CHEBI:17843"/>
    </ligand>
</feature>
<feature type="binding site" evidence="1">
    <location>
        <position position="116"/>
    </location>
    <ligand>
        <name>tRNA</name>
        <dbReference type="ChEBI" id="CHEBI:17843"/>
    </ligand>
</feature>
<feature type="site" description="Discriminates between blocked and unblocked aminoacyl-tRNA" evidence="1">
    <location>
        <position position="12"/>
    </location>
</feature>
<feature type="site" description="Stabilizes the basic form of H active site to accept a proton" evidence="1">
    <location>
        <position position="95"/>
    </location>
</feature>
<comment type="function">
    <text evidence="1">Hydrolyzes ribosome-free peptidyl-tRNAs (with 1 or more amino acids incorporated), which drop off the ribosome during protein synthesis, or as a result of ribosome stalling.</text>
</comment>
<comment type="function">
    <text evidence="1">Catalyzes the release of premature peptidyl moieties from peptidyl-tRNA molecules trapped in stalled 50S ribosomal subunits, and thus maintains levels of free tRNAs and 50S ribosomes.</text>
</comment>
<comment type="catalytic activity">
    <reaction evidence="1">
        <text>an N-acyl-L-alpha-aminoacyl-tRNA + H2O = an N-acyl-L-amino acid + a tRNA + H(+)</text>
        <dbReference type="Rhea" id="RHEA:54448"/>
        <dbReference type="Rhea" id="RHEA-COMP:10123"/>
        <dbReference type="Rhea" id="RHEA-COMP:13883"/>
        <dbReference type="ChEBI" id="CHEBI:15377"/>
        <dbReference type="ChEBI" id="CHEBI:15378"/>
        <dbReference type="ChEBI" id="CHEBI:59874"/>
        <dbReference type="ChEBI" id="CHEBI:78442"/>
        <dbReference type="ChEBI" id="CHEBI:138191"/>
        <dbReference type="EC" id="3.1.1.29"/>
    </reaction>
</comment>
<comment type="subunit">
    <text evidence="1">Monomer.</text>
</comment>
<comment type="subcellular location">
    <subcellularLocation>
        <location evidence="1">Cytoplasm</location>
    </subcellularLocation>
</comment>
<comment type="similarity">
    <text evidence="1">Belongs to the PTH family.</text>
</comment>
<evidence type="ECO:0000255" key="1">
    <source>
        <dbReference type="HAMAP-Rule" id="MF_00083"/>
    </source>
</evidence>
<name>PTH_FRAT1</name>
<proteinExistence type="inferred from homology"/>
<gene>
    <name evidence="1" type="primary">pth</name>
    <name type="ordered locus">FTF0680c</name>
</gene>
<sequence>MPKIKMIIGLGNIGKEYQDTRHNVGEWFIAKIAQDNNQSFSSNPKLNCNLAKVSIDYNNVVLVFPTTYMNNSGLAVSKVANFYKIAPAEILVVHDELDIDSGEIRLKKGGGHGGHNGLRSINQHLGTNDYLRLRIGIGHPGHKSKVANYVLSNPSIAQKKDIDSAIDNGICFLDDIINYKLEPVMQKLHTK</sequence>
<keyword id="KW-0963">Cytoplasm</keyword>
<keyword id="KW-0378">Hydrolase</keyword>
<keyword id="KW-0694">RNA-binding</keyword>
<keyword id="KW-0820">tRNA-binding</keyword>
<organism>
    <name type="scientific">Francisella tularensis subsp. tularensis (strain FSC 198)</name>
    <dbReference type="NCBI Taxonomy" id="393115"/>
    <lineage>
        <taxon>Bacteria</taxon>
        <taxon>Pseudomonadati</taxon>
        <taxon>Pseudomonadota</taxon>
        <taxon>Gammaproteobacteria</taxon>
        <taxon>Thiotrichales</taxon>
        <taxon>Francisellaceae</taxon>
        <taxon>Francisella</taxon>
    </lineage>
</organism>
<protein>
    <recommendedName>
        <fullName evidence="1">Peptidyl-tRNA hydrolase</fullName>
        <shortName evidence="1">Pth</shortName>
        <ecNumber evidence="1">3.1.1.29</ecNumber>
    </recommendedName>
</protein>